<evidence type="ECO:0000255" key="1">
    <source>
        <dbReference type="HAMAP-Rule" id="MF_01328"/>
    </source>
</evidence>
<evidence type="ECO:0000256" key="2">
    <source>
        <dbReference type="SAM" id="MobiDB-lite"/>
    </source>
</evidence>
<evidence type="ECO:0000305" key="3"/>
<keyword id="KW-1185">Reference proteome</keyword>
<keyword id="KW-0687">Ribonucleoprotein</keyword>
<keyword id="KW-0689">Ribosomal protein</keyword>
<keyword id="KW-0694">RNA-binding</keyword>
<keyword id="KW-0699">rRNA-binding</keyword>
<accession>B9JVN8</accession>
<feature type="chain" id="PRO_1000165979" description="Large ribosomal subunit protein uL4">
    <location>
        <begin position="1"/>
        <end position="206"/>
    </location>
</feature>
<feature type="region of interest" description="Disordered" evidence="2">
    <location>
        <begin position="63"/>
        <end position="96"/>
    </location>
</feature>
<feature type="compositionally biased region" description="Basic residues" evidence="2">
    <location>
        <begin position="64"/>
        <end position="77"/>
    </location>
</feature>
<proteinExistence type="inferred from homology"/>
<organism>
    <name type="scientific">Allorhizobium ampelinum (strain ATCC BAA-846 / DSM 112012 / S4)</name>
    <name type="common">Agrobacterium vitis (strain S4)</name>
    <dbReference type="NCBI Taxonomy" id="311402"/>
    <lineage>
        <taxon>Bacteria</taxon>
        <taxon>Pseudomonadati</taxon>
        <taxon>Pseudomonadota</taxon>
        <taxon>Alphaproteobacteria</taxon>
        <taxon>Hyphomicrobiales</taxon>
        <taxon>Rhizobiaceae</taxon>
        <taxon>Rhizobium/Agrobacterium group</taxon>
        <taxon>Allorhizobium</taxon>
        <taxon>Allorhizobium ampelinum</taxon>
    </lineage>
</organism>
<sequence>MELNVKTLEGTDAGTVSLSDAIFGLEPRQDIIARMVRWQLAKKQQGTHKTKTRAEVSRTGAKMYKQKGTGRARHHSARAPQFRGGGKAHGPVVRSHEHDLPKKVRALALRHALSAKFKADELIIVDQLVAADAKTKAAVGVFEALGLKNALVIGGVELDVNFKLAAANIPNIDVLPVQGINVYDILRRGKLVLSKAAVEALEERFK</sequence>
<reference key="1">
    <citation type="journal article" date="2009" name="J. Bacteriol.">
        <title>Genome sequences of three Agrobacterium biovars help elucidate the evolution of multichromosome genomes in bacteria.</title>
        <authorList>
            <person name="Slater S.C."/>
            <person name="Goldman B.S."/>
            <person name="Goodner B."/>
            <person name="Setubal J.C."/>
            <person name="Farrand S.K."/>
            <person name="Nester E.W."/>
            <person name="Burr T.J."/>
            <person name="Banta L."/>
            <person name="Dickerman A.W."/>
            <person name="Paulsen I."/>
            <person name="Otten L."/>
            <person name="Suen G."/>
            <person name="Welch R."/>
            <person name="Almeida N.F."/>
            <person name="Arnold F."/>
            <person name="Burton O.T."/>
            <person name="Du Z."/>
            <person name="Ewing A."/>
            <person name="Godsy E."/>
            <person name="Heisel S."/>
            <person name="Houmiel K.L."/>
            <person name="Jhaveri J."/>
            <person name="Lu J."/>
            <person name="Miller N.M."/>
            <person name="Norton S."/>
            <person name="Chen Q."/>
            <person name="Phoolcharoen W."/>
            <person name="Ohlin V."/>
            <person name="Ondrusek D."/>
            <person name="Pride N."/>
            <person name="Stricklin S.L."/>
            <person name="Sun J."/>
            <person name="Wheeler C."/>
            <person name="Wilson L."/>
            <person name="Zhu H."/>
            <person name="Wood D.W."/>
        </authorList>
    </citation>
    <scope>NUCLEOTIDE SEQUENCE [LARGE SCALE GENOMIC DNA]</scope>
    <source>
        <strain>ATCC BAA-846 / DSM 112012 / S4</strain>
    </source>
</reference>
<protein>
    <recommendedName>
        <fullName evidence="1">Large ribosomal subunit protein uL4</fullName>
    </recommendedName>
    <alternativeName>
        <fullName evidence="3">50S ribosomal protein L4</fullName>
    </alternativeName>
</protein>
<dbReference type="EMBL" id="CP000633">
    <property type="protein sequence ID" value="ACM36318.1"/>
    <property type="molecule type" value="Genomic_DNA"/>
</dbReference>
<dbReference type="RefSeq" id="WP_015915739.1">
    <property type="nucleotide sequence ID" value="NC_011989.1"/>
</dbReference>
<dbReference type="SMR" id="B9JVN8"/>
<dbReference type="STRING" id="311402.Avi_1841"/>
<dbReference type="KEGG" id="avi:Avi_1841"/>
<dbReference type="eggNOG" id="COG0088">
    <property type="taxonomic scope" value="Bacteria"/>
</dbReference>
<dbReference type="HOGENOM" id="CLU_041575_5_1_5"/>
<dbReference type="Proteomes" id="UP000001596">
    <property type="component" value="Chromosome 1"/>
</dbReference>
<dbReference type="GO" id="GO:1990904">
    <property type="term" value="C:ribonucleoprotein complex"/>
    <property type="evidence" value="ECO:0007669"/>
    <property type="project" value="UniProtKB-KW"/>
</dbReference>
<dbReference type="GO" id="GO:0005840">
    <property type="term" value="C:ribosome"/>
    <property type="evidence" value="ECO:0007669"/>
    <property type="project" value="UniProtKB-KW"/>
</dbReference>
<dbReference type="GO" id="GO:0019843">
    <property type="term" value="F:rRNA binding"/>
    <property type="evidence" value="ECO:0007669"/>
    <property type="project" value="UniProtKB-UniRule"/>
</dbReference>
<dbReference type="GO" id="GO:0003735">
    <property type="term" value="F:structural constituent of ribosome"/>
    <property type="evidence" value="ECO:0007669"/>
    <property type="project" value="InterPro"/>
</dbReference>
<dbReference type="GO" id="GO:0006412">
    <property type="term" value="P:translation"/>
    <property type="evidence" value="ECO:0007669"/>
    <property type="project" value="UniProtKB-UniRule"/>
</dbReference>
<dbReference type="Gene3D" id="3.40.1370.10">
    <property type="match status" value="1"/>
</dbReference>
<dbReference type="HAMAP" id="MF_01328_B">
    <property type="entry name" value="Ribosomal_uL4_B"/>
    <property type="match status" value="1"/>
</dbReference>
<dbReference type="InterPro" id="IPR002136">
    <property type="entry name" value="Ribosomal_uL4"/>
</dbReference>
<dbReference type="InterPro" id="IPR013005">
    <property type="entry name" value="Ribosomal_uL4-like"/>
</dbReference>
<dbReference type="InterPro" id="IPR023574">
    <property type="entry name" value="Ribosomal_uL4_dom_sf"/>
</dbReference>
<dbReference type="NCBIfam" id="TIGR03953">
    <property type="entry name" value="rplD_bact"/>
    <property type="match status" value="1"/>
</dbReference>
<dbReference type="PANTHER" id="PTHR10746">
    <property type="entry name" value="50S RIBOSOMAL PROTEIN L4"/>
    <property type="match status" value="1"/>
</dbReference>
<dbReference type="PANTHER" id="PTHR10746:SF6">
    <property type="entry name" value="LARGE RIBOSOMAL SUBUNIT PROTEIN UL4M"/>
    <property type="match status" value="1"/>
</dbReference>
<dbReference type="Pfam" id="PF00573">
    <property type="entry name" value="Ribosomal_L4"/>
    <property type="match status" value="1"/>
</dbReference>
<dbReference type="SUPFAM" id="SSF52166">
    <property type="entry name" value="Ribosomal protein L4"/>
    <property type="match status" value="1"/>
</dbReference>
<name>RL4_ALLAM</name>
<comment type="function">
    <text evidence="1">One of the primary rRNA binding proteins, this protein initially binds near the 5'-end of the 23S rRNA. It is important during the early stages of 50S assembly. It makes multiple contacts with different domains of the 23S rRNA in the assembled 50S subunit and ribosome.</text>
</comment>
<comment type="function">
    <text evidence="1">Forms part of the polypeptide exit tunnel.</text>
</comment>
<comment type="subunit">
    <text evidence="1">Part of the 50S ribosomal subunit.</text>
</comment>
<comment type="similarity">
    <text evidence="1">Belongs to the universal ribosomal protein uL4 family.</text>
</comment>
<gene>
    <name evidence="1" type="primary">rplD</name>
    <name type="ordered locus">Avi_1841</name>
</gene>